<keyword id="KW-0489">Methyltransferase</keyword>
<keyword id="KW-0808">Transferase</keyword>
<name>ADAD_ASPNG</name>
<comment type="function">
    <text evidence="3">O-methyltransferase; part of the gene cluster that mediates the biosynthesis of the linear tetracyclic TAN-1612 neuropeptide Y receptor antagonist (PubMed:21866960). The decaketide backbone of TAN-1612 is synthesized by the non-reducing polyketide synthase adaA via condensation of one acetyl-CoA starter unit with 9 malonyl-CoA units. The FAD-dependent monooxygenase adaC then performs hydroxylation at C2 while the polaketide chain is still attached to the NRPKS adaA (PubMed:21866960). The alpha-hydroxylation step at C2 appears to be crucial for the following C18-C1 Claisen cyclization and release of the C9-hydroxyl version of TAN-1612 from the NRPKS adaA, two steps performed by the lactamase-like protein adaB (PubMed:21866960). Finally, the O-methyltransferase adaD performs the C9 O-methylation to complete the biosynthesis of TAN-1612 (PubMed:21866960).</text>
</comment>
<comment type="catalytic activity">
    <reaction evidence="3">
        <text>2-acetyl-3,4a,8,10,11,12a-hexahydroxy-1,4,4a,5,12,12a-hexahydrotetracene-1,12-dione + S-adenosyl-L-methionine = TAN-1612 + S-adenosyl-L-homocysteine + H(+)</text>
        <dbReference type="Rhea" id="RHEA:64100"/>
        <dbReference type="ChEBI" id="CHEBI:15378"/>
        <dbReference type="ChEBI" id="CHEBI:57856"/>
        <dbReference type="ChEBI" id="CHEBI:59789"/>
        <dbReference type="ChEBI" id="CHEBI:146217"/>
        <dbReference type="ChEBI" id="CHEBI:146218"/>
    </reaction>
    <physiologicalReaction direction="left-to-right" evidence="3">
        <dbReference type="Rhea" id="RHEA:64101"/>
    </physiologicalReaction>
</comment>
<comment type="pathway">
    <text evidence="3">Secondary metabolite biosynthesis.</text>
</comment>
<comment type="similarity">
    <text evidence="1">Belongs to the methyltransferase superfamily.</text>
</comment>
<protein>
    <recommendedName>
        <fullName evidence="4">O-methyltransferase adaD</fullName>
        <ecNumber evidence="3">2.1.1.-</ecNumber>
    </recommendedName>
    <alternativeName>
        <fullName evidence="4">2-acetyl-2-decarboxamidoanthrotainin biosynthesis cluster protein D</fullName>
    </alternativeName>
</protein>
<reference key="1">
    <citation type="journal article" date="2011" name="J. Am. Chem. Soc.">
        <title>Comparative characterization of fungal anthracenone and naphthacenedione biosynthetic pathways reveals an alpha-hydroxylation-dependent Claisen-like cyclization catalyzed by a dimanganese thioesterase.</title>
        <authorList>
            <person name="Li Y."/>
            <person name="Chooi Y.H."/>
            <person name="Sheng Y."/>
            <person name="Valentine J.S."/>
            <person name="Tang Y."/>
        </authorList>
    </citation>
    <scope>NUCLEOTIDE SEQUENCE [GENOMIC DNA]</scope>
    <scope>IDENTIFICATION</scope>
    <scope>FUNCTION</scope>
    <scope>CATALYTIC ACTIVITY</scope>
    <scope>PATHWAY</scope>
    <source>
        <strain>ATCC 1015 / NV DSM 2061</strain>
    </source>
</reference>
<reference key="2">
    <citation type="journal article" date="2018" name="Front. Microbiol.">
        <title>Forward genetics by genome sequencing uncovers the central role of the Aspergillus niger goxB locus in hydrogen peroxide induced glucose oxidase expression.</title>
        <authorList>
            <person name="Laothanachareon T."/>
            <person name="Tamayo-Ramos J.A."/>
            <person name="Nijsse B."/>
            <person name="Schaap P.J."/>
        </authorList>
    </citation>
    <scope>NUCLEOTIDE SEQUENCE [LARGE SCALE GENOMIC DNA]</scope>
    <source>
        <strain>ATCC 64974 / FGSC A733 / N402</strain>
    </source>
</reference>
<organism>
    <name type="scientific">Aspergillus niger</name>
    <dbReference type="NCBI Taxonomy" id="5061"/>
    <lineage>
        <taxon>Eukaryota</taxon>
        <taxon>Fungi</taxon>
        <taxon>Dikarya</taxon>
        <taxon>Ascomycota</taxon>
        <taxon>Pezizomycotina</taxon>
        <taxon>Eurotiomycetes</taxon>
        <taxon>Eurotiomycetidae</taxon>
        <taxon>Eurotiales</taxon>
        <taxon>Aspergillaceae</taxon>
        <taxon>Aspergillus</taxon>
        <taxon>Aspergillus subgen. Circumdati</taxon>
    </lineage>
</organism>
<accession>G3KLH3</accession>
<evidence type="ECO:0000255" key="1"/>
<evidence type="ECO:0000256" key="2">
    <source>
        <dbReference type="SAM" id="MobiDB-lite"/>
    </source>
</evidence>
<evidence type="ECO:0000269" key="3">
    <source>
    </source>
</evidence>
<evidence type="ECO:0000303" key="4">
    <source>
    </source>
</evidence>
<sequence>MSSVTLTTTTTTTSTPPKPTPKDEPQEQIYTPWRLFIYDIWVLGIVSTLAWGCRISTYLIPLFRSNVGKKHLDIGAGTGYYLNQARISSTTQLTIVDNETHALNVALARCKHPVTQTHGIVTDILQPSPFPETYLTNNDQKFDSVSMYYLLHCLPVPVASKCKIFTHLKKYMTEDGVVHGANVLGKGVRKDNWFARIIRRGCLNHGVFHNEEDNAYEFERALRENFWEVETWVVGSVFVFRAKRPILDA</sequence>
<dbReference type="EC" id="2.1.1.-" evidence="3"/>
<dbReference type="EMBL" id="JN257714">
    <property type="protein sequence ID" value="AEN83886.1"/>
    <property type="molecule type" value="Genomic_DNA"/>
</dbReference>
<dbReference type="EMBL" id="OGUI01000016">
    <property type="protein sequence ID" value="SPB51663.1"/>
    <property type="molecule type" value="Genomic_DNA"/>
</dbReference>
<dbReference type="PaxDb" id="5061-CADANGAP00008890"/>
<dbReference type="VEuPathDB" id="FungiDB:An11g07340"/>
<dbReference type="VEuPathDB" id="FungiDB:ASPNIDRAFT2_1139200"/>
<dbReference type="VEuPathDB" id="FungiDB:ATCC64974_92730"/>
<dbReference type="VEuPathDB" id="FungiDB:M747DRAFT_298770"/>
<dbReference type="GO" id="GO:0008168">
    <property type="term" value="F:methyltransferase activity"/>
    <property type="evidence" value="ECO:0007669"/>
    <property type="project" value="UniProtKB-KW"/>
</dbReference>
<dbReference type="GO" id="GO:0032259">
    <property type="term" value="P:methylation"/>
    <property type="evidence" value="ECO:0007669"/>
    <property type="project" value="UniProtKB-KW"/>
</dbReference>
<dbReference type="Gene3D" id="3.40.50.150">
    <property type="entry name" value="Vaccinia Virus protein VP39"/>
    <property type="match status" value="1"/>
</dbReference>
<dbReference type="InterPro" id="IPR025714">
    <property type="entry name" value="Methyltranfer_dom"/>
</dbReference>
<dbReference type="InterPro" id="IPR029063">
    <property type="entry name" value="SAM-dependent_MTases_sf"/>
</dbReference>
<dbReference type="Pfam" id="PF13847">
    <property type="entry name" value="Methyltransf_31"/>
    <property type="match status" value="1"/>
</dbReference>
<dbReference type="SUPFAM" id="SSF53335">
    <property type="entry name" value="S-adenosyl-L-methionine-dependent methyltransferases"/>
    <property type="match status" value="1"/>
</dbReference>
<gene>
    <name evidence="4" type="primary">adaD</name>
    <name type="ORF">ATCC64974_92730</name>
</gene>
<feature type="chain" id="PRO_0000446349" description="O-methyltransferase adaD">
    <location>
        <begin position="1"/>
        <end position="249"/>
    </location>
</feature>
<feature type="region of interest" description="Disordered" evidence="2">
    <location>
        <begin position="1"/>
        <end position="26"/>
    </location>
</feature>
<feature type="compositionally biased region" description="Low complexity" evidence="2">
    <location>
        <begin position="1"/>
        <end position="15"/>
    </location>
</feature>
<proteinExistence type="evidence at protein level"/>